<organism>
    <name type="scientific">Clostridium botulinum (strain Okra / Type B1)</name>
    <dbReference type="NCBI Taxonomy" id="498213"/>
    <lineage>
        <taxon>Bacteria</taxon>
        <taxon>Bacillati</taxon>
        <taxon>Bacillota</taxon>
        <taxon>Clostridia</taxon>
        <taxon>Eubacteriales</taxon>
        <taxon>Clostridiaceae</taxon>
        <taxon>Clostridium</taxon>
    </lineage>
</organism>
<keyword id="KW-0489">Methyltransferase</keyword>
<keyword id="KW-0949">S-adenosyl-L-methionine</keyword>
<keyword id="KW-0808">Transferase</keyword>
<keyword id="KW-0819">tRNA processing</keyword>
<protein>
    <recommendedName>
        <fullName evidence="1">tRNA (guanine-N(7)-)-methyltransferase</fullName>
        <ecNumber evidence="1">2.1.1.33</ecNumber>
    </recommendedName>
    <alternativeName>
        <fullName evidence="1">tRNA (guanine(46)-N(7))-methyltransferase</fullName>
    </alternativeName>
    <alternativeName>
        <fullName evidence="1">tRNA(m7G46)-methyltransferase</fullName>
    </alternativeName>
</protein>
<dbReference type="EC" id="2.1.1.33" evidence="1"/>
<dbReference type="EMBL" id="CP000939">
    <property type="protein sequence ID" value="ACA45942.1"/>
    <property type="molecule type" value="Genomic_DNA"/>
</dbReference>
<dbReference type="RefSeq" id="WP_004451213.1">
    <property type="nucleotide sequence ID" value="NC_010516.1"/>
</dbReference>
<dbReference type="SMR" id="B1IEK9"/>
<dbReference type="KEGG" id="cbb:CLD_0249"/>
<dbReference type="HOGENOM" id="CLU_050910_2_1_9"/>
<dbReference type="UniPathway" id="UPA00989"/>
<dbReference type="Proteomes" id="UP000008541">
    <property type="component" value="Chromosome"/>
</dbReference>
<dbReference type="GO" id="GO:0043527">
    <property type="term" value="C:tRNA methyltransferase complex"/>
    <property type="evidence" value="ECO:0007669"/>
    <property type="project" value="TreeGrafter"/>
</dbReference>
<dbReference type="GO" id="GO:0008176">
    <property type="term" value="F:tRNA (guanine(46)-N7)-methyltransferase activity"/>
    <property type="evidence" value="ECO:0007669"/>
    <property type="project" value="UniProtKB-UniRule"/>
</dbReference>
<dbReference type="FunFam" id="3.40.50.150:FF:000396">
    <property type="entry name" value="tRNA (guanine-N(7)-)-methyltransferase"/>
    <property type="match status" value="1"/>
</dbReference>
<dbReference type="Gene3D" id="3.40.50.150">
    <property type="entry name" value="Vaccinia Virus protein VP39"/>
    <property type="match status" value="1"/>
</dbReference>
<dbReference type="HAMAP" id="MF_01057">
    <property type="entry name" value="tRNA_methyltr_TrmB"/>
    <property type="match status" value="1"/>
</dbReference>
<dbReference type="InterPro" id="IPR029063">
    <property type="entry name" value="SAM-dependent_MTases_sf"/>
</dbReference>
<dbReference type="InterPro" id="IPR003358">
    <property type="entry name" value="tRNA_(Gua-N-7)_MeTrfase_Trmb"/>
</dbReference>
<dbReference type="InterPro" id="IPR055361">
    <property type="entry name" value="tRNA_methyltr_TrmB_bact"/>
</dbReference>
<dbReference type="NCBIfam" id="NF001080">
    <property type="entry name" value="PRK00121.2-2"/>
    <property type="match status" value="1"/>
</dbReference>
<dbReference type="NCBIfam" id="TIGR00091">
    <property type="entry name" value="tRNA (guanosine(46)-N7)-methyltransferase TrmB"/>
    <property type="match status" value="1"/>
</dbReference>
<dbReference type="PANTHER" id="PTHR23417">
    <property type="entry name" value="3-DEOXY-D-MANNO-OCTULOSONIC-ACID TRANSFERASE/TRNA GUANINE-N 7 - -METHYLTRANSFERASE"/>
    <property type="match status" value="1"/>
</dbReference>
<dbReference type="PANTHER" id="PTHR23417:SF14">
    <property type="entry name" value="PENTACOTRIPEPTIDE-REPEAT REGION OF PRORP DOMAIN-CONTAINING PROTEIN"/>
    <property type="match status" value="1"/>
</dbReference>
<dbReference type="Pfam" id="PF02390">
    <property type="entry name" value="Methyltransf_4"/>
    <property type="match status" value="1"/>
</dbReference>
<dbReference type="SUPFAM" id="SSF53335">
    <property type="entry name" value="S-adenosyl-L-methionine-dependent methyltransferases"/>
    <property type="match status" value="1"/>
</dbReference>
<dbReference type="PROSITE" id="PS51625">
    <property type="entry name" value="SAM_MT_TRMB"/>
    <property type="match status" value="1"/>
</dbReference>
<comment type="function">
    <text evidence="1">Catalyzes the formation of N(7)-methylguanine at position 46 (m7G46) in tRNA.</text>
</comment>
<comment type="catalytic activity">
    <reaction evidence="1">
        <text>guanosine(46) in tRNA + S-adenosyl-L-methionine = N(7)-methylguanosine(46) in tRNA + S-adenosyl-L-homocysteine</text>
        <dbReference type="Rhea" id="RHEA:42708"/>
        <dbReference type="Rhea" id="RHEA-COMP:10188"/>
        <dbReference type="Rhea" id="RHEA-COMP:10189"/>
        <dbReference type="ChEBI" id="CHEBI:57856"/>
        <dbReference type="ChEBI" id="CHEBI:59789"/>
        <dbReference type="ChEBI" id="CHEBI:74269"/>
        <dbReference type="ChEBI" id="CHEBI:74480"/>
        <dbReference type="EC" id="2.1.1.33"/>
    </reaction>
</comment>
<comment type="pathway">
    <text evidence="1">tRNA modification; N(7)-methylguanine-tRNA biosynthesis.</text>
</comment>
<comment type="similarity">
    <text evidence="1">Belongs to the class I-like SAM-binding methyltransferase superfamily. TrmB family.</text>
</comment>
<reference key="1">
    <citation type="journal article" date="2007" name="PLoS ONE">
        <title>Analysis of the neurotoxin complex genes in Clostridium botulinum A1-A4 and B1 strains: BoNT/A3, /Ba4 and /B1 clusters are located within plasmids.</title>
        <authorList>
            <person name="Smith T.J."/>
            <person name="Hill K.K."/>
            <person name="Foley B.T."/>
            <person name="Detter J.C."/>
            <person name="Munk A.C."/>
            <person name="Bruce D.C."/>
            <person name="Doggett N.A."/>
            <person name="Smith L.A."/>
            <person name="Marks J.D."/>
            <person name="Xie G."/>
            <person name="Brettin T.S."/>
        </authorList>
    </citation>
    <scope>NUCLEOTIDE SEQUENCE [LARGE SCALE GENOMIC DNA]</scope>
    <source>
        <strain>Okra / Type B1</strain>
    </source>
</reference>
<evidence type="ECO:0000255" key="1">
    <source>
        <dbReference type="HAMAP-Rule" id="MF_01057"/>
    </source>
</evidence>
<sequence>MRLRKKWWARPEIEASDKFAEEPKELRGKWNKEFNNNNDIHLELGCGRGGFISQLVEKNKDINYVGIDLKDEVIVYAIRKVKEKEEEVKREFKNIRFVTMNIMGIAEVFDKNEISKIYINFCNPWPKEKHNKRRLTHTKLLTEYKKFLKPNTEIWFKTDDKELFEDSQEYFKESGFNIEYITYDLHNSDFKENIKTEYETKFETMGMKIMFLKARLL</sequence>
<proteinExistence type="inferred from homology"/>
<accession>B1IEK9</accession>
<feature type="chain" id="PRO_1000136347" description="tRNA (guanine-N(7)-)-methyltransferase">
    <location>
        <begin position="1"/>
        <end position="217"/>
    </location>
</feature>
<feature type="region of interest" description="Interaction with RNA" evidence="1">
    <location>
        <begin position="129"/>
        <end position="134"/>
    </location>
</feature>
<feature type="binding site" evidence="1">
    <location>
        <position position="43"/>
    </location>
    <ligand>
        <name>S-adenosyl-L-methionine</name>
        <dbReference type="ChEBI" id="CHEBI:59789"/>
    </ligand>
</feature>
<feature type="binding site" evidence="1">
    <location>
        <position position="68"/>
    </location>
    <ligand>
        <name>S-adenosyl-L-methionine</name>
        <dbReference type="ChEBI" id="CHEBI:59789"/>
    </ligand>
</feature>
<feature type="binding site" evidence="1">
    <location>
        <position position="101"/>
    </location>
    <ligand>
        <name>S-adenosyl-L-methionine</name>
        <dbReference type="ChEBI" id="CHEBI:59789"/>
    </ligand>
</feature>
<feature type="binding site" evidence="1">
    <location>
        <position position="123"/>
    </location>
    <ligand>
        <name>S-adenosyl-L-methionine</name>
        <dbReference type="ChEBI" id="CHEBI:59789"/>
    </ligand>
</feature>
<feature type="binding site" evidence="1">
    <location>
        <position position="127"/>
    </location>
    <ligand>
        <name>substrate</name>
    </ligand>
</feature>
<feature type="binding site" evidence="1">
    <location>
        <position position="159"/>
    </location>
    <ligand>
        <name>substrate</name>
    </ligand>
</feature>
<feature type="binding site" evidence="1">
    <location>
        <begin position="196"/>
        <end position="199"/>
    </location>
    <ligand>
        <name>substrate</name>
    </ligand>
</feature>
<name>TRMB_CLOBK</name>
<gene>
    <name evidence="1" type="primary">trmB</name>
    <name type="ordered locus">CLD_0249</name>
</gene>